<sequence length="317" mass="34502">MKIKLANPRGFCAGVDRAIEIVNRALDVFGAPIYVRHEVVHNRFVVEGLRTRGAVFVDELDEVPDGALVIFSAHGVSQEVRQEADARGLKVFDATCPLVTKVHMEVMRYSRDGRECILIGHAGHPEVEGTMGQYDSANGGAIYLVEDEEDVGRLIVNDPGNLAYVTQTTLSVDDTARVIDALRQTFPEIKGPRKDDICYATQNRQDAVKELAATCDVVLVVGSVNSSNSNRLRELAERMQTPAYLIDGAHEIQPDWFAGAASVGVTAGASAPEVLVQQVVQRLRELGGEAPAEIAGREENIVFSMPKELRIPAVNQS</sequence>
<dbReference type="EC" id="1.17.7.4" evidence="1"/>
<dbReference type="EMBL" id="CP000155">
    <property type="protein sequence ID" value="ABC32582.1"/>
    <property type="molecule type" value="Genomic_DNA"/>
</dbReference>
<dbReference type="RefSeq" id="WP_011399640.1">
    <property type="nucleotide sequence ID" value="NC_007645.1"/>
</dbReference>
<dbReference type="SMR" id="Q2S9U2"/>
<dbReference type="STRING" id="349521.HCH_05930"/>
<dbReference type="KEGG" id="hch:HCH_05930"/>
<dbReference type="eggNOG" id="COG0761">
    <property type="taxonomic scope" value="Bacteria"/>
</dbReference>
<dbReference type="HOGENOM" id="CLU_027486_1_0_6"/>
<dbReference type="OrthoDB" id="9804068at2"/>
<dbReference type="UniPathway" id="UPA00056">
    <property type="reaction ID" value="UER00097"/>
</dbReference>
<dbReference type="UniPathway" id="UPA00059">
    <property type="reaction ID" value="UER00105"/>
</dbReference>
<dbReference type="Proteomes" id="UP000000238">
    <property type="component" value="Chromosome"/>
</dbReference>
<dbReference type="GO" id="GO:0051539">
    <property type="term" value="F:4 iron, 4 sulfur cluster binding"/>
    <property type="evidence" value="ECO:0007669"/>
    <property type="project" value="UniProtKB-UniRule"/>
</dbReference>
<dbReference type="GO" id="GO:0051745">
    <property type="term" value="F:4-hydroxy-3-methylbut-2-enyl diphosphate reductase activity"/>
    <property type="evidence" value="ECO:0007669"/>
    <property type="project" value="UniProtKB-UniRule"/>
</dbReference>
<dbReference type="GO" id="GO:0046872">
    <property type="term" value="F:metal ion binding"/>
    <property type="evidence" value="ECO:0007669"/>
    <property type="project" value="UniProtKB-KW"/>
</dbReference>
<dbReference type="GO" id="GO:0050992">
    <property type="term" value="P:dimethylallyl diphosphate biosynthetic process"/>
    <property type="evidence" value="ECO:0007669"/>
    <property type="project" value="UniProtKB-UniRule"/>
</dbReference>
<dbReference type="GO" id="GO:0019288">
    <property type="term" value="P:isopentenyl diphosphate biosynthetic process, methylerythritol 4-phosphate pathway"/>
    <property type="evidence" value="ECO:0007669"/>
    <property type="project" value="UniProtKB-UniRule"/>
</dbReference>
<dbReference type="GO" id="GO:0016114">
    <property type="term" value="P:terpenoid biosynthetic process"/>
    <property type="evidence" value="ECO:0007669"/>
    <property type="project" value="UniProtKB-UniRule"/>
</dbReference>
<dbReference type="CDD" id="cd13944">
    <property type="entry name" value="lytB_ispH"/>
    <property type="match status" value="1"/>
</dbReference>
<dbReference type="Gene3D" id="3.40.50.11270">
    <property type="match status" value="1"/>
</dbReference>
<dbReference type="Gene3D" id="3.40.1010.20">
    <property type="entry name" value="4-hydroxy-3-methylbut-2-enyl diphosphate reductase, catalytic domain"/>
    <property type="match status" value="2"/>
</dbReference>
<dbReference type="HAMAP" id="MF_00191">
    <property type="entry name" value="IspH"/>
    <property type="match status" value="1"/>
</dbReference>
<dbReference type="InterPro" id="IPR003451">
    <property type="entry name" value="LytB/IspH"/>
</dbReference>
<dbReference type="NCBIfam" id="TIGR00216">
    <property type="entry name" value="ispH_lytB"/>
    <property type="match status" value="1"/>
</dbReference>
<dbReference type="NCBIfam" id="NF002188">
    <property type="entry name" value="PRK01045.1-2"/>
    <property type="match status" value="1"/>
</dbReference>
<dbReference type="NCBIfam" id="NF002190">
    <property type="entry name" value="PRK01045.1-4"/>
    <property type="match status" value="1"/>
</dbReference>
<dbReference type="PANTHER" id="PTHR30426">
    <property type="entry name" value="4-HYDROXY-3-METHYLBUT-2-ENYL DIPHOSPHATE REDUCTASE"/>
    <property type="match status" value="1"/>
</dbReference>
<dbReference type="PANTHER" id="PTHR30426:SF0">
    <property type="entry name" value="4-HYDROXY-3-METHYLBUT-2-ENYL DIPHOSPHATE REDUCTASE"/>
    <property type="match status" value="1"/>
</dbReference>
<dbReference type="Pfam" id="PF02401">
    <property type="entry name" value="LYTB"/>
    <property type="match status" value="1"/>
</dbReference>
<organism>
    <name type="scientific">Hahella chejuensis (strain KCTC 2396)</name>
    <dbReference type="NCBI Taxonomy" id="349521"/>
    <lineage>
        <taxon>Bacteria</taxon>
        <taxon>Pseudomonadati</taxon>
        <taxon>Pseudomonadota</taxon>
        <taxon>Gammaproteobacteria</taxon>
        <taxon>Oceanospirillales</taxon>
        <taxon>Hahellaceae</taxon>
        <taxon>Hahella</taxon>
    </lineage>
</organism>
<accession>Q2S9U2</accession>
<name>ISPH_HAHCH</name>
<evidence type="ECO:0000255" key="1">
    <source>
        <dbReference type="HAMAP-Rule" id="MF_00191"/>
    </source>
</evidence>
<reference key="1">
    <citation type="journal article" date="2005" name="Nucleic Acids Res.">
        <title>Genomic blueprint of Hahella chejuensis, a marine microbe producing an algicidal agent.</title>
        <authorList>
            <person name="Jeong H."/>
            <person name="Yim J.H."/>
            <person name="Lee C."/>
            <person name="Choi S.-H."/>
            <person name="Park Y.K."/>
            <person name="Yoon S.H."/>
            <person name="Hur C.-G."/>
            <person name="Kang H.-Y."/>
            <person name="Kim D."/>
            <person name="Lee H.H."/>
            <person name="Park K.H."/>
            <person name="Park S.-H."/>
            <person name="Park H.-S."/>
            <person name="Lee H.K."/>
            <person name="Oh T.K."/>
            <person name="Kim J.F."/>
        </authorList>
    </citation>
    <scope>NUCLEOTIDE SEQUENCE [LARGE SCALE GENOMIC DNA]</scope>
    <source>
        <strain>KCTC 2396</strain>
    </source>
</reference>
<gene>
    <name evidence="1" type="primary">ispH</name>
    <name type="ordered locus">HCH_05930</name>
</gene>
<protein>
    <recommendedName>
        <fullName evidence="1">4-hydroxy-3-methylbut-2-enyl diphosphate reductase</fullName>
        <shortName evidence="1">HMBPP reductase</shortName>
        <ecNumber evidence="1">1.17.7.4</ecNumber>
    </recommendedName>
</protein>
<comment type="function">
    <text evidence="1">Catalyzes the conversion of 1-hydroxy-2-methyl-2-(E)-butenyl 4-diphosphate (HMBPP) into a mixture of isopentenyl diphosphate (IPP) and dimethylallyl diphosphate (DMAPP). Acts in the terminal step of the DOXP/MEP pathway for isoprenoid precursor biosynthesis.</text>
</comment>
<comment type="catalytic activity">
    <reaction evidence="1">
        <text>isopentenyl diphosphate + 2 oxidized [2Fe-2S]-[ferredoxin] + H2O = (2E)-4-hydroxy-3-methylbut-2-enyl diphosphate + 2 reduced [2Fe-2S]-[ferredoxin] + 2 H(+)</text>
        <dbReference type="Rhea" id="RHEA:24488"/>
        <dbReference type="Rhea" id="RHEA-COMP:10000"/>
        <dbReference type="Rhea" id="RHEA-COMP:10001"/>
        <dbReference type="ChEBI" id="CHEBI:15377"/>
        <dbReference type="ChEBI" id="CHEBI:15378"/>
        <dbReference type="ChEBI" id="CHEBI:33737"/>
        <dbReference type="ChEBI" id="CHEBI:33738"/>
        <dbReference type="ChEBI" id="CHEBI:128753"/>
        <dbReference type="ChEBI" id="CHEBI:128769"/>
        <dbReference type="EC" id="1.17.7.4"/>
    </reaction>
</comment>
<comment type="catalytic activity">
    <reaction evidence="1">
        <text>dimethylallyl diphosphate + 2 oxidized [2Fe-2S]-[ferredoxin] + H2O = (2E)-4-hydroxy-3-methylbut-2-enyl diphosphate + 2 reduced [2Fe-2S]-[ferredoxin] + 2 H(+)</text>
        <dbReference type="Rhea" id="RHEA:24825"/>
        <dbReference type="Rhea" id="RHEA-COMP:10000"/>
        <dbReference type="Rhea" id="RHEA-COMP:10001"/>
        <dbReference type="ChEBI" id="CHEBI:15377"/>
        <dbReference type="ChEBI" id="CHEBI:15378"/>
        <dbReference type="ChEBI" id="CHEBI:33737"/>
        <dbReference type="ChEBI" id="CHEBI:33738"/>
        <dbReference type="ChEBI" id="CHEBI:57623"/>
        <dbReference type="ChEBI" id="CHEBI:128753"/>
        <dbReference type="EC" id="1.17.7.4"/>
    </reaction>
</comment>
<comment type="cofactor">
    <cofactor evidence="1">
        <name>[4Fe-4S] cluster</name>
        <dbReference type="ChEBI" id="CHEBI:49883"/>
    </cofactor>
    <text evidence="1">Binds 1 [4Fe-4S] cluster per subunit.</text>
</comment>
<comment type="pathway">
    <text evidence="1">Isoprenoid biosynthesis; dimethylallyl diphosphate biosynthesis; dimethylallyl diphosphate from (2E)-4-hydroxy-3-methylbutenyl diphosphate: step 1/1.</text>
</comment>
<comment type="pathway">
    <text evidence="1">Isoprenoid biosynthesis; isopentenyl diphosphate biosynthesis via DXP pathway; isopentenyl diphosphate from 1-deoxy-D-xylulose 5-phosphate: step 6/6.</text>
</comment>
<comment type="similarity">
    <text evidence="1">Belongs to the IspH family.</text>
</comment>
<keyword id="KW-0004">4Fe-4S</keyword>
<keyword id="KW-0408">Iron</keyword>
<keyword id="KW-0411">Iron-sulfur</keyword>
<keyword id="KW-0414">Isoprene biosynthesis</keyword>
<keyword id="KW-0479">Metal-binding</keyword>
<keyword id="KW-0560">Oxidoreductase</keyword>
<keyword id="KW-1185">Reference proteome</keyword>
<feature type="chain" id="PRO_1000021131" description="4-hydroxy-3-methylbut-2-enyl diphosphate reductase">
    <location>
        <begin position="1"/>
        <end position="317"/>
    </location>
</feature>
<feature type="active site" description="Proton donor" evidence="1">
    <location>
        <position position="126"/>
    </location>
</feature>
<feature type="binding site" evidence="1">
    <location>
        <position position="12"/>
    </location>
    <ligand>
        <name>[4Fe-4S] cluster</name>
        <dbReference type="ChEBI" id="CHEBI:49883"/>
    </ligand>
</feature>
<feature type="binding site" evidence="1">
    <location>
        <position position="41"/>
    </location>
    <ligand>
        <name>(2E)-4-hydroxy-3-methylbut-2-enyl diphosphate</name>
        <dbReference type="ChEBI" id="CHEBI:128753"/>
    </ligand>
</feature>
<feature type="binding site" evidence="1">
    <location>
        <position position="41"/>
    </location>
    <ligand>
        <name>dimethylallyl diphosphate</name>
        <dbReference type="ChEBI" id="CHEBI:57623"/>
    </ligand>
</feature>
<feature type="binding site" evidence="1">
    <location>
        <position position="41"/>
    </location>
    <ligand>
        <name>isopentenyl diphosphate</name>
        <dbReference type="ChEBI" id="CHEBI:128769"/>
    </ligand>
</feature>
<feature type="binding site" evidence="1">
    <location>
        <position position="74"/>
    </location>
    <ligand>
        <name>(2E)-4-hydroxy-3-methylbut-2-enyl diphosphate</name>
        <dbReference type="ChEBI" id="CHEBI:128753"/>
    </ligand>
</feature>
<feature type="binding site" evidence="1">
    <location>
        <position position="74"/>
    </location>
    <ligand>
        <name>dimethylallyl diphosphate</name>
        <dbReference type="ChEBI" id="CHEBI:57623"/>
    </ligand>
</feature>
<feature type="binding site" evidence="1">
    <location>
        <position position="74"/>
    </location>
    <ligand>
        <name>isopentenyl diphosphate</name>
        <dbReference type="ChEBI" id="CHEBI:128769"/>
    </ligand>
</feature>
<feature type="binding site" evidence="1">
    <location>
        <position position="96"/>
    </location>
    <ligand>
        <name>[4Fe-4S] cluster</name>
        <dbReference type="ChEBI" id="CHEBI:49883"/>
    </ligand>
</feature>
<feature type="binding site" evidence="1">
    <location>
        <position position="124"/>
    </location>
    <ligand>
        <name>(2E)-4-hydroxy-3-methylbut-2-enyl diphosphate</name>
        <dbReference type="ChEBI" id="CHEBI:128753"/>
    </ligand>
</feature>
<feature type="binding site" evidence="1">
    <location>
        <position position="124"/>
    </location>
    <ligand>
        <name>dimethylallyl diphosphate</name>
        <dbReference type="ChEBI" id="CHEBI:57623"/>
    </ligand>
</feature>
<feature type="binding site" evidence="1">
    <location>
        <position position="124"/>
    </location>
    <ligand>
        <name>isopentenyl diphosphate</name>
        <dbReference type="ChEBI" id="CHEBI:128769"/>
    </ligand>
</feature>
<feature type="binding site" evidence="1">
    <location>
        <position position="168"/>
    </location>
    <ligand>
        <name>(2E)-4-hydroxy-3-methylbut-2-enyl diphosphate</name>
        <dbReference type="ChEBI" id="CHEBI:128753"/>
    </ligand>
</feature>
<feature type="binding site" evidence="1">
    <location>
        <position position="198"/>
    </location>
    <ligand>
        <name>[4Fe-4S] cluster</name>
        <dbReference type="ChEBI" id="CHEBI:49883"/>
    </ligand>
</feature>
<feature type="binding site" evidence="1">
    <location>
        <position position="226"/>
    </location>
    <ligand>
        <name>(2E)-4-hydroxy-3-methylbut-2-enyl diphosphate</name>
        <dbReference type="ChEBI" id="CHEBI:128753"/>
    </ligand>
</feature>
<feature type="binding site" evidence="1">
    <location>
        <position position="226"/>
    </location>
    <ligand>
        <name>dimethylallyl diphosphate</name>
        <dbReference type="ChEBI" id="CHEBI:57623"/>
    </ligand>
</feature>
<feature type="binding site" evidence="1">
    <location>
        <position position="226"/>
    </location>
    <ligand>
        <name>isopentenyl diphosphate</name>
        <dbReference type="ChEBI" id="CHEBI:128769"/>
    </ligand>
</feature>
<feature type="binding site" evidence="1">
    <location>
        <position position="227"/>
    </location>
    <ligand>
        <name>(2E)-4-hydroxy-3-methylbut-2-enyl diphosphate</name>
        <dbReference type="ChEBI" id="CHEBI:128753"/>
    </ligand>
</feature>
<feature type="binding site" evidence="1">
    <location>
        <position position="227"/>
    </location>
    <ligand>
        <name>dimethylallyl diphosphate</name>
        <dbReference type="ChEBI" id="CHEBI:57623"/>
    </ligand>
</feature>
<feature type="binding site" evidence="1">
    <location>
        <position position="227"/>
    </location>
    <ligand>
        <name>isopentenyl diphosphate</name>
        <dbReference type="ChEBI" id="CHEBI:128769"/>
    </ligand>
</feature>
<feature type="binding site" evidence="1">
    <location>
        <position position="228"/>
    </location>
    <ligand>
        <name>(2E)-4-hydroxy-3-methylbut-2-enyl diphosphate</name>
        <dbReference type="ChEBI" id="CHEBI:128753"/>
    </ligand>
</feature>
<feature type="binding site" evidence="1">
    <location>
        <position position="228"/>
    </location>
    <ligand>
        <name>dimethylallyl diphosphate</name>
        <dbReference type="ChEBI" id="CHEBI:57623"/>
    </ligand>
</feature>
<feature type="binding site" evidence="1">
    <location>
        <position position="228"/>
    </location>
    <ligand>
        <name>isopentenyl diphosphate</name>
        <dbReference type="ChEBI" id="CHEBI:128769"/>
    </ligand>
</feature>
<feature type="binding site" evidence="1">
    <location>
        <position position="270"/>
    </location>
    <ligand>
        <name>(2E)-4-hydroxy-3-methylbut-2-enyl diphosphate</name>
        <dbReference type="ChEBI" id="CHEBI:128753"/>
    </ligand>
</feature>
<feature type="binding site" evidence="1">
    <location>
        <position position="270"/>
    </location>
    <ligand>
        <name>dimethylallyl diphosphate</name>
        <dbReference type="ChEBI" id="CHEBI:57623"/>
    </ligand>
</feature>
<feature type="binding site" evidence="1">
    <location>
        <position position="270"/>
    </location>
    <ligand>
        <name>isopentenyl diphosphate</name>
        <dbReference type="ChEBI" id="CHEBI:128769"/>
    </ligand>
</feature>
<proteinExistence type="inferred from homology"/>